<comment type="function">
    <text evidence="1">May negatively regulate the snf1 kinase.</text>
</comment>
<comment type="subcellular location">
    <subcellularLocation>
        <location evidence="1">Cytoplasm</location>
    </subcellularLocation>
</comment>
<comment type="similarity">
    <text evidence="3">Belongs to the SIP5 family.</text>
</comment>
<evidence type="ECO:0000250" key="1"/>
<evidence type="ECO:0000256" key="2">
    <source>
        <dbReference type="SAM" id="MobiDB-lite"/>
    </source>
</evidence>
<evidence type="ECO:0000305" key="3"/>
<proteinExistence type="inferred from homology"/>
<keyword id="KW-0963">Cytoplasm</keyword>
<keyword id="KW-1185">Reference proteome</keyword>
<reference key="1">
    <citation type="journal article" date="2011" name="PLoS Genet.">
        <title>Genomic analysis of the necrotrophic fungal pathogens Sclerotinia sclerotiorum and Botrytis cinerea.</title>
        <authorList>
            <person name="Amselem J."/>
            <person name="Cuomo C.A."/>
            <person name="van Kan J.A.L."/>
            <person name="Viaud M."/>
            <person name="Benito E.P."/>
            <person name="Couloux A."/>
            <person name="Coutinho P.M."/>
            <person name="de Vries R.P."/>
            <person name="Dyer P.S."/>
            <person name="Fillinger S."/>
            <person name="Fournier E."/>
            <person name="Gout L."/>
            <person name="Hahn M."/>
            <person name="Kohn L."/>
            <person name="Lapalu N."/>
            <person name="Plummer K.M."/>
            <person name="Pradier J.-M."/>
            <person name="Quevillon E."/>
            <person name="Sharon A."/>
            <person name="Simon A."/>
            <person name="ten Have A."/>
            <person name="Tudzynski B."/>
            <person name="Tudzynski P."/>
            <person name="Wincker P."/>
            <person name="Andrew M."/>
            <person name="Anthouard V."/>
            <person name="Beever R.E."/>
            <person name="Beffa R."/>
            <person name="Benoit I."/>
            <person name="Bouzid O."/>
            <person name="Brault B."/>
            <person name="Chen Z."/>
            <person name="Choquer M."/>
            <person name="Collemare J."/>
            <person name="Cotton P."/>
            <person name="Danchin E.G."/>
            <person name="Da Silva C."/>
            <person name="Gautier A."/>
            <person name="Giraud C."/>
            <person name="Giraud T."/>
            <person name="Gonzalez C."/>
            <person name="Grossetete S."/>
            <person name="Gueldener U."/>
            <person name="Henrissat B."/>
            <person name="Howlett B.J."/>
            <person name="Kodira C."/>
            <person name="Kretschmer M."/>
            <person name="Lappartient A."/>
            <person name="Leroch M."/>
            <person name="Levis C."/>
            <person name="Mauceli E."/>
            <person name="Neuveglise C."/>
            <person name="Oeser B."/>
            <person name="Pearson M."/>
            <person name="Poulain J."/>
            <person name="Poussereau N."/>
            <person name="Quesneville H."/>
            <person name="Rascle C."/>
            <person name="Schumacher J."/>
            <person name="Segurens B."/>
            <person name="Sexton A."/>
            <person name="Silva E."/>
            <person name="Sirven C."/>
            <person name="Soanes D.M."/>
            <person name="Talbot N.J."/>
            <person name="Templeton M."/>
            <person name="Yandava C."/>
            <person name="Yarden O."/>
            <person name="Zeng Q."/>
            <person name="Rollins J.A."/>
            <person name="Lebrun M.-H."/>
            <person name="Dickman M."/>
        </authorList>
    </citation>
    <scope>NUCLEOTIDE SEQUENCE [LARGE SCALE GENOMIC DNA]</scope>
    <source>
        <strain>ATCC 18683 / 1980 / Ss-1</strain>
    </source>
</reference>
<name>SIP5_SCLS1</name>
<organism>
    <name type="scientific">Sclerotinia sclerotiorum (strain ATCC 18683 / 1980 / Ss-1)</name>
    <name type="common">White mold</name>
    <name type="synonym">Whetzelinia sclerotiorum</name>
    <dbReference type="NCBI Taxonomy" id="665079"/>
    <lineage>
        <taxon>Eukaryota</taxon>
        <taxon>Fungi</taxon>
        <taxon>Dikarya</taxon>
        <taxon>Ascomycota</taxon>
        <taxon>Pezizomycotina</taxon>
        <taxon>Leotiomycetes</taxon>
        <taxon>Helotiales</taxon>
        <taxon>Sclerotiniaceae</taxon>
        <taxon>Sclerotinia</taxon>
    </lineage>
</organism>
<feature type="chain" id="PRO_0000333443" description="Protein sip5">
    <location>
        <begin position="1"/>
        <end position="862"/>
    </location>
</feature>
<feature type="region of interest" description="Disordered" evidence="2">
    <location>
        <begin position="1"/>
        <end position="70"/>
    </location>
</feature>
<feature type="region of interest" description="Disordered" evidence="2">
    <location>
        <begin position="201"/>
        <end position="261"/>
    </location>
</feature>
<feature type="region of interest" description="Disordered" evidence="2">
    <location>
        <begin position="380"/>
        <end position="415"/>
    </location>
</feature>
<feature type="region of interest" description="Disordered" evidence="2">
    <location>
        <begin position="465"/>
        <end position="524"/>
    </location>
</feature>
<feature type="region of interest" description="Disordered" evidence="2">
    <location>
        <begin position="551"/>
        <end position="591"/>
    </location>
</feature>
<feature type="region of interest" description="Disordered" evidence="2">
    <location>
        <begin position="605"/>
        <end position="735"/>
    </location>
</feature>
<feature type="region of interest" description="Disordered" evidence="2">
    <location>
        <begin position="750"/>
        <end position="784"/>
    </location>
</feature>
<feature type="region of interest" description="Disordered" evidence="2">
    <location>
        <begin position="825"/>
        <end position="862"/>
    </location>
</feature>
<feature type="compositionally biased region" description="Polar residues" evidence="2">
    <location>
        <begin position="1"/>
        <end position="12"/>
    </location>
</feature>
<feature type="compositionally biased region" description="Basic and acidic residues" evidence="2">
    <location>
        <begin position="13"/>
        <end position="24"/>
    </location>
</feature>
<feature type="compositionally biased region" description="Polar residues" evidence="2">
    <location>
        <begin position="201"/>
        <end position="218"/>
    </location>
</feature>
<feature type="compositionally biased region" description="Low complexity" evidence="2">
    <location>
        <begin position="380"/>
        <end position="397"/>
    </location>
</feature>
<feature type="compositionally biased region" description="Polar residues" evidence="2">
    <location>
        <begin position="465"/>
        <end position="491"/>
    </location>
</feature>
<feature type="compositionally biased region" description="Basic and acidic residues" evidence="2">
    <location>
        <begin position="551"/>
        <end position="578"/>
    </location>
</feature>
<feature type="compositionally biased region" description="Low complexity" evidence="2">
    <location>
        <begin position="579"/>
        <end position="591"/>
    </location>
</feature>
<feature type="compositionally biased region" description="Polar residues" evidence="2">
    <location>
        <begin position="640"/>
        <end position="676"/>
    </location>
</feature>
<feature type="compositionally biased region" description="Polar residues" evidence="2">
    <location>
        <begin position="688"/>
        <end position="724"/>
    </location>
</feature>
<feature type="compositionally biased region" description="Basic and acidic residues" evidence="2">
    <location>
        <begin position="751"/>
        <end position="778"/>
    </location>
</feature>
<feature type="compositionally biased region" description="Polar residues" evidence="2">
    <location>
        <begin position="847"/>
        <end position="862"/>
    </location>
</feature>
<protein>
    <recommendedName>
        <fullName>Protein sip5</fullName>
    </recommendedName>
</protein>
<dbReference type="EMBL" id="CH476625">
    <property type="protein sequence ID" value="EDO02261.1"/>
    <property type="molecule type" value="Genomic_DNA"/>
</dbReference>
<dbReference type="RefSeq" id="XP_001594929.1">
    <property type="nucleotide sequence ID" value="XM_001594879.1"/>
</dbReference>
<dbReference type="SMR" id="A7EHE5"/>
<dbReference type="FunCoup" id="A7EHE5">
    <property type="interactions" value="39"/>
</dbReference>
<dbReference type="STRING" id="665079.A7EHE5"/>
<dbReference type="EnsemblFungi" id="EDO02261">
    <property type="protein sequence ID" value="EDO02261"/>
    <property type="gene ID" value="SS1G_04737"/>
</dbReference>
<dbReference type="GeneID" id="5490470"/>
<dbReference type="KEGG" id="ssl:SS1G_04737"/>
<dbReference type="VEuPathDB" id="FungiDB:sscle_02g014480"/>
<dbReference type="eggNOG" id="KOG2789">
    <property type="taxonomic scope" value="Eukaryota"/>
</dbReference>
<dbReference type="HOGENOM" id="CLU_009068_1_0_1"/>
<dbReference type="InParanoid" id="A7EHE5"/>
<dbReference type="OMA" id="CFLTYPP"/>
<dbReference type="OrthoDB" id="21471at2759"/>
<dbReference type="Proteomes" id="UP000001312">
    <property type="component" value="Unassembled WGS sequence"/>
</dbReference>
<dbReference type="GO" id="GO:0005737">
    <property type="term" value="C:cytoplasm"/>
    <property type="evidence" value="ECO:0007669"/>
    <property type="project" value="UniProtKB-SubCell"/>
</dbReference>
<dbReference type="CDD" id="cd24139">
    <property type="entry name" value="SIP5-like"/>
    <property type="match status" value="1"/>
</dbReference>
<dbReference type="InterPro" id="IPR039301">
    <property type="entry name" value="Sip5/DA2"/>
</dbReference>
<dbReference type="InterPro" id="IPR013087">
    <property type="entry name" value="Znf_C2H2_type"/>
</dbReference>
<dbReference type="PANTHER" id="PTHR31315">
    <property type="entry name" value="PROTEIN SIP5"/>
    <property type="match status" value="1"/>
</dbReference>
<dbReference type="PANTHER" id="PTHR31315:SF1">
    <property type="entry name" value="PROTEIN SIP5"/>
    <property type="match status" value="1"/>
</dbReference>
<sequence length="862" mass="93141">MGHQQSSMNPSRGDSHGDRHRHYDAGVSGPTSASDQDPYASRNGRGGRRNLVAAIVGGGSNNEVPERKETAAERQLRRLERERIARIEERERSIKEEHVDGGYLVTMGVYTGPEDFNKAIVRQLMIERRVAPFWRGLDDYQDDWTEHQLVAAGRGLPIPAADEVPAEDIAGPHSPDSANVSSSNLQNLMVPLASRTQSASYDTSLSLSPSHPAFSTPSSVPPLNAPTTSTSLLRPRSKTLGLRSSAKEPPAPDPAPREIQLPRDTQVNGQAIEAFLYKDAVECSICLIWYPPYLNRTRCCDQSICSECFVQIKRPEPHTPEHHGPPPIASENAEDTEMLVSEPAACPYCQRPEFGVTYEPPPFRRGLVYAKPSPEVANFSSAMSSSSSINSPPLTSSGLAAPRGDRRRATSLSANDSHVITTDRIRPDWSAKLEAANLRKAKKNAAASALHAAAFVLPGTSENRTYTFGRSRFGRNNRSDNSAEASGTATPPNRDASSRAVIESSGHARREDQDPNATRRMRRDDLEELMMAEAIRLSIAAEEERKKKANKEAAKEAVKQAKKQAKEDKKKEKKERKSIYGANGNSASSSMLNLGSSIAATFTGRRRGDSTASHLAIEVTPEEVEVPVQGKGKGVDRPSLANQGSSTDNGLPSGQHSDPSTSSSLLETHQSVTSPASPDKLSHIREMSTVSSAASSLVESGNGTNAQGSSTSIENPGTNGASSEGNEDGDSGTESMFNFQSLTALIEKEDDNEKTHSADHVENAHEASDSRHGSRDENASQDMDVSMETIRPADSPARVDNIDRNHSSTTGLQMLDTEIDTSIITPQLTITPETPAVMNPTEENGKQLGSSFTSRTNAEITQ</sequence>
<gene>
    <name type="primary">sip5</name>
    <name type="ORF">SS1G_04737</name>
</gene>
<accession>A7EHE5</accession>